<accession>Q6B0K9</accession>
<sequence>MLSAQERAQIAQVWDLIAGHEAQFGAELLLRLFTVYPSTKVYFPHLSACQDATQLLSHGQRMLAAVGAAVQHVDNLRAALSPLADLHALVLRVDPANFPLLIQCFHVVLASHLQDEFTVQMQAAWDKFLTGVAVVLTEKYR</sequence>
<reference key="1">
    <citation type="journal article" date="2005" name="Blood">
        <title>A newly discovered human alpha-globin gene.</title>
        <authorList>
            <person name="Goh S.-H."/>
            <person name="Lee Y.T."/>
            <person name="Bhanu N.V."/>
            <person name="Cam M.C."/>
            <person name="Desper R."/>
            <person name="Martin B.M."/>
            <person name="Moharram R."/>
            <person name="Gherman R.B."/>
            <person name="Miller J.L."/>
        </authorList>
    </citation>
    <scope>NUCLEOTIDE SEQUENCE [MRNA]</scope>
    <scope>TISSUE SPECIFICITY</scope>
    <scope>DEVELOPMENTAL STAGE</scope>
    <source>
        <tissue>Blood</tissue>
    </source>
</reference>
<reference key="2">
    <citation type="journal article" date="2006" name="Science">
        <title>A regulatory SNP causes a human genetic disease by creating a new transcriptional promoter.</title>
        <authorList>
            <person name="De Gobbi M."/>
            <person name="Viprakasit V."/>
            <person name="Hughes J.R."/>
            <person name="Fisher C."/>
            <person name="Buckle V.J."/>
            <person name="Ayyub H."/>
            <person name="Gibbons R.J."/>
            <person name="Vernimmen D."/>
            <person name="Yoshinaga Y."/>
            <person name="de Jong P."/>
            <person name="Cheng J.-F."/>
            <person name="Rubin E.M."/>
            <person name="Wood W.G."/>
            <person name="Bowden D."/>
            <person name="Higgs D.R."/>
        </authorList>
    </citation>
    <scope>NUCLEOTIDE SEQUENCE [GENOMIC DNA]</scope>
</reference>
<reference key="3">
    <citation type="journal article" date="2004" name="Genome Res.">
        <title>The status, quality, and expansion of the NIH full-length cDNA project: the Mammalian Gene Collection (MGC).</title>
        <authorList>
            <consortium name="The MGC Project Team"/>
        </authorList>
    </citation>
    <scope>NUCLEOTIDE SEQUENCE [LARGE SCALE MRNA]</scope>
    <source>
        <tissue>Pancreas</tissue>
    </source>
</reference>
<evidence type="ECO:0000255" key="1">
    <source>
        <dbReference type="PROSITE-ProRule" id="PRU00238"/>
    </source>
</evidence>
<evidence type="ECO:0000269" key="2">
    <source>
    </source>
</evidence>
<dbReference type="EMBL" id="AY698022">
    <property type="protein sequence ID" value="AAT92513.1"/>
    <property type="molecule type" value="mRNA"/>
</dbReference>
<dbReference type="EMBL" id="DQ431198">
    <property type="protein sequence ID" value="ABD95909.1"/>
    <property type="molecule type" value="Genomic_DNA"/>
</dbReference>
<dbReference type="EMBL" id="BC035682">
    <property type="protein sequence ID" value="AAH35682.1"/>
    <property type="molecule type" value="mRNA"/>
</dbReference>
<dbReference type="CCDS" id="CCDS32347.1"/>
<dbReference type="RefSeq" id="NP_001003938.1">
    <property type="nucleotide sequence ID" value="NM_001003938.4"/>
</dbReference>
<dbReference type="SMR" id="Q6B0K9"/>
<dbReference type="BioGRID" id="109292">
    <property type="interactions" value="26"/>
</dbReference>
<dbReference type="FunCoup" id="Q6B0K9">
    <property type="interactions" value="27"/>
</dbReference>
<dbReference type="IntAct" id="Q6B0K9">
    <property type="interactions" value="25"/>
</dbReference>
<dbReference type="STRING" id="9606.ENSP00000349270"/>
<dbReference type="BioMuta" id="HBM"/>
<dbReference type="DMDM" id="74748384"/>
<dbReference type="MassIVE" id="Q6B0K9"/>
<dbReference type="PaxDb" id="9606-ENSP00000349270"/>
<dbReference type="PeptideAtlas" id="Q6B0K9"/>
<dbReference type="ProteomicsDB" id="66208"/>
<dbReference type="Antibodypedia" id="55238">
    <property type="antibodies" value="36 antibodies from 13 providers"/>
</dbReference>
<dbReference type="DNASU" id="3042"/>
<dbReference type="Ensembl" id="ENST00000356815.4">
    <property type="protein sequence ID" value="ENSP00000349270.3"/>
    <property type="gene ID" value="ENSG00000206177.7"/>
</dbReference>
<dbReference type="GeneID" id="3042"/>
<dbReference type="KEGG" id="hsa:3042"/>
<dbReference type="MANE-Select" id="ENST00000356815.4">
    <property type="protein sequence ID" value="ENSP00000349270.3"/>
    <property type="RefSeq nucleotide sequence ID" value="NM_001003938.4"/>
    <property type="RefSeq protein sequence ID" value="NP_001003938.1"/>
</dbReference>
<dbReference type="UCSC" id="uc002cfu.2">
    <property type="organism name" value="human"/>
</dbReference>
<dbReference type="AGR" id="HGNC:4826"/>
<dbReference type="CTD" id="3042"/>
<dbReference type="DisGeNET" id="3042"/>
<dbReference type="GeneCards" id="HBM"/>
<dbReference type="HGNC" id="HGNC:4826">
    <property type="gene designation" value="HBM"/>
</dbReference>
<dbReference type="HPA" id="ENSG00000206177">
    <property type="expression patterns" value="Tissue enriched (bone)"/>
</dbReference>
<dbReference type="MIM" id="609639">
    <property type="type" value="gene"/>
</dbReference>
<dbReference type="neXtProt" id="NX_Q6B0K9"/>
<dbReference type="OpenTargets" id="ENSG00000206177"/>
<dbReference type="PharmGKB" id="PA29201"/>
<dbReference type="VEuPathDB" id="HostDB:ENSG00000206177"/>
<dbReference type="eggNOG" id="KOG3378">
    <property type="taxonomic scope" value="Eukaryota"/>
</dbReference>
<dbReference type="GeneTree" id="ENSGT00940000163447"/>
<dbReference type="HOGENOM" id="CLU_003827_10_2_1"/>
<dbReference type="InParanoid" id="Q6B0K9"/>
<dbReference type="OMA" id="EMHAAWD"/>
<dbReference type="OrthoDB" id="8751793at2759"/>
<dbReference type="PAN-GO" id="Q6B0K9">
    <property type="GO annotations" value="9 GO annotations based on evolutionary models"/>
</dbReference>
<dbReference type="PhylomeDB" id="Q6B0K9"/>
<dbReference type="TreeFam" id="TF332328"/>
<dbReference type="PathwayCommons" id="Q6B0K9"/>
<dbReference type="SignaLink" id="Q6B0K9"/>
<dbReference type="BioGRID-ORCS" id="3042">
    <property type="hits" value="14 hits in 1136 CRISPR screens"/>
</dbReference>
<dbReference type="ChiTaRS" id="HBM">
    <property type="organism name" value="human"/>
</dbReference>
<dbReference type="GenomeRNAi" id="3042"/>
<dbReference type="Pharos" id="Q6B0K9">
    <property type="development level" value="Tdark"/>
</dbReference>
<dbReference type="PRO" id="PR:Q6B0K9"/>
<dbReference type="Proteomes" id="UP000005640">
    <property type="component" value="Chromosome 16"/>
</dbReference>
<dbReference type="RNAct" id="Q6B0K9">
    <property type="molecule type" value="protein"/>
</dbReference>
<dbReference type="Bgee" id="ENSG00000206177">
    <property type="expression patterns" value="Expressed in trabecular bone tissue and 110 other cell types or tissues"/>
</dbReference>
<dbReference type="ExpressionAtlas" id="Q6B0K9">
    <property type="expression patterns" value="baseline and differential"/>
</dbReference>
<dbReference type="GO" id="GO:0031838">
    <property type="term" value="C:haptoglobin-hemoglobin complex"/>
    <property type="evidence" value="ECO:0000318"/>
    <property type="project" value="GO_Central"/>
</dbReference>
<dbReference type="GO" id="GO:0005833">
    <property type="term" value="C:hemoglobin complex"/>
    <property type="evidence" value="ECO:0000318"/>
    <property type="project" value="GO_Central"/>
</dbReference>
<dbReference type="GO" id="GO:0020037">
    <property type="term" value="F:heme binding"/>
    <property type="evidence" value="ECO:0000318"/>
    <property type="project" value="GO_Central"/>
</dbReference>
<dbReference type="GO" id="GO:0046872">
    <property type="term" value="F:metal ion binding"/>
    <property type="evidence" value="ECO:0007669"/>
    <property type="project" value="UniProtKB-KW"/>
</dbReference>
<dbReference type="GO" id="GO:0019825">
    <property type="term" value="F:oxygen binding"/>
    <property type="evidence" value="ECO:0000318"/>
    <property type="project" value="GO_Central"/>
</dbReference>
<dbReference type="GO" id="GO:0005344">
    <property type="term" value="F:oxygen carrier activity"/>
    <property type="evidence" value="ECO:0000318"/>
    <property type="project" value="GO_Central"/>
</dbReference>
<dbReference type="GO" id="GO:0098869">
    <property type="term" value="P:cellular oxidant detoxification"/>
    <property type="evidence" value="ECO:0007669"/>
    <property type="project" value="GOC"/>
</dbReference>
<dbReference type="GO" id="GO:0042744">
    <property type="term" value="P:hydrogen peroxide catabolic process"/>
    <property type="evidence" value="ECO:0000318"/>
    <property type="project" value="GO_Central"/>
</dbReference>
<dbReference type="CDD" id="cd08927">
    <property type="entry name" value="Hb-alpha-like"/>
    <property type="match status" value="1"/>
</dbReference>
<dbReference type="FunFam" id="1.10.490.10:FF:000009">
    <property type="entry name" value="hemoglobin subunit mu"/>
    <property type="match status" value="1"/>
</dbReference>
<dbReference type="Gene3D" id="1.10.490.10">
    <property type="entry name" value="Globins"/>
    <property type="match status" value="1"/>
</dbReference>
<dbReference type="InterPro" id="IPR000971">
    <property type="entry name" value="Globin"/>
</dbReference>
<dbReference type="InterPro" id="IPR009050">
    <property type="entry name" value="Globin-like_sf"/>
</dbReference>
<dbReference type="InterPro" id="IPR012292">
    <property type="entry name" value="Globin/Proto"/>
</dbReference>
<dbReference type="InterPro" id="IPR002338">
    <property type="entry name" value="Hemoglobin_a-typ"/>
</dbReference>
<dbReference type="InterPro" id="IPR050056">
    <property type="entry name" value="Hemoglobin_oxygen_transport"/>
</dbReference>
<dbReference type="PANTHER" id="PTHR11442">
    <property type="entry name" value="HEMOGLOBIN FAMILY MEMBER"/>
    <property type="match status" value="1"/>
</dbReference>
<dbReference type="PANTHER" id="PTHR11442:SF8">
    <property type="entry name" value="HEMOGLOBIN SUBUNIT MU"/>
    <property type="match status" value="1"/>
</dbReference>
<dbReference type="Pfam" id="PF00042">
    <property type="entry name" value="Globin"/>
    <property type="match status" value="1"/>
</dbReference>
<dbReference type="PRINTS" id="PR00612">
    <property type="entry name" value="ALPHAHAEM"/>
</dbReference>
<dbReference type="SUPFAM" id="SSF46458">
    <property type="entry name" value="Globin-like"/>
    <property type="match status" value="1"/>
</dbReference>
<dbReference type="PROSITE" id="PS01033">
    <property type="entry name" value="GLOBIN"/>
    <property type="match status" value="1"/>
</dbReference>
<proteinExistence type="evidence at protein level"/>
<feature type="chain" id="PRO_0000282855" description="Hemoglobin subunit mu">
    <location>
        <begin position="1"/>
        <end position="141"/>
    </location>
</feature>
<feature type="domain" description="Globin" evidence="1">
    <location>
        <begin position="1"/>
        <end position="141"/>
    </location>
</feature>
<feature type="binding site" description="distal binding residue" evidence="1">
    <location>
        <position position="58"/>
    </location>
    <ligand>
        <name>heme b</name>
        <dbReference type="ChEBI" id="CHEBI:60344"/>
    </ligand>
    <ligandPart>
        <name>Fe</name>
        <dbReference type="ChEBI" id="CHEBI:18248"/>
    </ligandPart>
</feature>
<feature type="binding site" description="proximal binding residue" evidence="1">
    <location>
        <position position="87"/>
    </location>
    <ligand>
        <name>heme b</name>
        <dbReference type="ChEBI" id="CHEBI:60344"/>
    </ligand>
    <ligandPart>
        <name>Fe</name>
        <dbReference type="ChEBI" id="CHEBI:18248"/>
    </ligandPart>
</feature>
<organism>
    <name type="scientific">Homo sapiens</name>
    <name type="common">Human</name>
    <dbReference type="NCBI Taxonomy" id="9606"/>
    <lineage>
        <taxon>Eukaryota</taxon>
        <taxon>Metazoa</taxon>
        <taxon>Chordata</taxon>
        <taxon>Craniata</taxon>
        <taxon>Vertebrata</taxon>
        <taxon>Euteleostomi</taxon>
        <taxon>Mammalia</taxon>
        <taxon>Eutheria</taxon>
        <taxon>Euarchontoglires</taxon>
        <taxon>Primates</taxon>
        <taxon>Haplorrhini</taxon>
        <taxon>Catarrhini</taxon>
        <taxon>Hominidae</taxon>
        <taxon>Homo</taxon>
    </lineage>
</organism>
<protein>
    <recommendedName>
        <fullName>Hemoglobin subunit mu</fullName>
    </recommendedName>
    <alternativeName>
        <fullName>Hemoglobin mu chain</fullName>
    </alternativeName>
    <alternativeName>
        <fullName>Mu-globin</fullName>
    </alternativeName>
</protein>
<keyword id="KW-0349">Heme</keyword>
<keyword id="KW-0408">Iron</keyword>
<keyword id="KW-0479">Metal-binding</keyword>
<keyword id="KW-0561">Oxygen transport</keyword>
<keyword id="KW-1267">Proteomics identification</keyword>
<keyword id="KW-1185">Reference proteome</keyword>
<keyword id="KW-0813">Transport</keyword>
<comment type="interaction">
    <interactant intactId="EBI-12805802">
        <id>Q6B0K9</id>
    </interactant>
    <interactant intactId="EBI-715554">
        <id>P68871</id>
        <label>HBB</label>
    </interactant>
    <organismsDiffer>false</organismsDiffer>
    <experiments>3</experiments>
</comment>
<comment type="interaction">
    <interactant intactId="EBI-12805802">
        <id>Q6B0K9</id>
    </interactant>
    <interactant intactId="EBI-3910089">
        <id>P69892</id>
        <label>HBG2</label>
    </interactant>
    <organismsDiffer>false</organismsDiffer>
    <experiments>6</experiments>
</comment>
<comment type="interaction">
    <interactant intactId="EBI-12805802">
        <id>Q6B0K9</id>
    </interactant>
    <interactant intactId="EBI-719843">
        <id>P02008</id>
        <label>HBZ</label>
    </interactant>
    <organismsDiffer>false</organismsDiffer>
    <experiments>3</experiments>
</comment>
<comment type="interaction">
    <interactant intactId="EBI-12805802">
        <id>Q6B0K9</id>
    </interactant>
    <interactant intactId="EBI-355744">
        <id>Q12933</id>
        <label>TRAF2</label>
    </interactant>
    <organismsDiffer>false</organismsDiffer>
    <experiments>3</experiments>
</comment>
<comment type="interaction">
    <interactant intactId="EBI-12805802">
        <id>Q6B0K9</id>
    </interactant>
    <interactant intactId="EBI-18054817">
        <id>Q69YN4-4</id>
        <label>VIRMA</label>
    </interactant>
    <organismsDiffer>false</organismsDiffer>
    <experiments>3</experiments>
</comment>
<comment type="tissue specificity">
    <text evidence="2">Expressed in erythroid tissues.</text>
</comment>
<comment type="developmental stage">
    <text evidence="2">Maximal expression during the erythroblast terminal differentiation.</text>
</comment>
<comment type="similarity">
    <text evidence="1">Belongs to the globin family.</text>
</comment>
<gene>
    <name type="primary">HBM</name>
    <name type="synonym">HBAP2</name>
</gene>
<name>HBM_HUMAN</name>